<reference key="1">
    <citation type="submission" date="1994-11" db="EMBL/GenBank/DDBJ databases">
        <authorList>
            <person name="Green C.J."/>
            <person name="Vold B.S."/>
        </authorList>
    </citation>
    <scope>NUCLEOTIDE SEQUENCE [GENOMIC DNA]</scope>
    <source>
        <strain>ATCC 12600 / DSM 20231 / IAM 12544 / NCDO 949 / NCTC 8532</strain>
    </source>
</reference>
<reference key="2">
    <citation type="journal article" date="2002" name="Anal. Biochem.">
        <title>Development of a fluorescence polarization assay for peptidyl-tRNA hydrolase.</title>
        <authorList>
            <person name="Bonin P.D."/>
            <person name="Erickson L.A."/>
        </authorList>
    </citation>
    <scope>CATALYTIC ACTIVITY</scope>
</reference>
<keyword id="KW-0030">Aminoacyl-tRNA synthetase</keyword>
<keyword id="KW-0067">ATP-binding</keyword>
<keyword id="KW-0963">Cytoplasm</keyword>
<keyword id="KW-0436">Ligase</keyword>
<keyword id="KW-0460">Magnesium</keyword>
<keyword id="KW-0479">Metal-binding</keyword>
<keyword id="KW-0547">Nucleotide-binding</keyword>
<keyword id="KW-0648">Protein biosynthesis</keyword>
<evidence type="ECO:0000250" key="1"/>
<evidence type="ECO:0000269" key="2">
    <source>
    </source>
</evidence>
<evidence type="ECO:0000303" key="3">
    <source>
    </source>
</evidence>
<evidence type="ECO:0000305" key="4"/>
<comment type="catalytic activity">
    <reaction evidence="2">
        <text>tRNA(Lys) + L-lysine + ATP = L-lysyl-tRNA(Lys) + AMP + diphosphate</text>
        <dbReference type="Rhea" id="RHEA:20792"/>
        <dbReference type="Rhea" id="RHEA-COMP:9696"/>
        <dbReference type="Rhea" id="RHEA-COMP:9697"/>
        <dbReference type="ChEBI" id="CHEBI:30616"/>
        <dbReference type="ChEBI" id="CHEBI:32551"/>
        <dbReference type="ChEBI" id="CHEBI:33019"/>
        <dbReference type="ChEBI" id="CHEBI:78442"/>
        <dbReference type="ChEBI" id="CHEBI:78529"/>
        <dbReference type="ChEBI" id="CHEBI:456215"/>
        <dbReference type="EC" id="6.1.1.6"/>
    </reaction>
</comment>
<comment type="cofactor">
    <cofactor evidence="1">
        <name>Mg(2+)</name>
        <dbReference type="ChEBI" id="CHEBI:18420"/>
    </cofactor>
    <text evidence="1">Binds 3 Mg(2+) ions per subunit.</text>
</comment>
<comment type="subunit">
    <text evidence="1">Homodimer.</text>
</comment>
<comment type="subcellular location">
    <subcellularLocation>
        <location evidence="1">Cytoplasm</location>
    </subcellularLocation>
</comment>
<comment type="similarity">
    <text evidence="4">Belongs to the class-II aminoacyl-tRNA synthetase family.</text>
</comment>
<name>SYK_STAAU</name>
<organism>
    <name type="scientific">Staphylococcus aureus</name>
    <dbReference type="NCBI Taxonomy" id="1280"/>
    <lineage>
        <taxon>Bacteria</taxon>
        <taxon>Bacillati</taxon>
        <taxon>Bacillota</taxon>
        <taxon>Bacilli</taxon>
        <taxon>Bacillales</taxon>
        <taxon>Staphylococcaceae</taxon>
        <taxon>Staphylococcus</taxon>
    </lineage>
</organism>
<protein>
    <recommendedName>
        <fullName>Lysine--tRNA ligase</fullName>
        <ecNumber evidence="2">6.1.1.6</ecNumber>
    </recommendedName>
    <alternativeName>
        <fullName evidence="3">Lysyl-tRNA synthetase</fullName>
        <shortName>LysRS</shortName>
    </alternativeName>
</protein>
<sequence length="495" mass="56889">MSEEMNDQMLVRRQKLQELYDLGIDPFGSKFDRSGLSSDLKEEWDQYSKEELVEKEADSHVAIAGRLMTKRGKGKAGFAHVQDLAGQIQIYVRKDQVGDDEFDLWKNADLGDIVGVEGVMFKTNTGELSVKAKKFTLLTKSLRPLPDKFHGLQDIEQRYRQRYLDLITNEDSTRTFINRSKIIQEMRNYLNNKGFLEVETPMMHQIAGGAAARPFVTHHNALDATLYMRIAIELHLKRLIVGGLEKVYEIGRVFRNEGVSTRHNPEFTMIELYEAYADYHDIMDLTESMVRHIANEVLGSAKVQYNGETIDLESAWTRLHIVDAVKEATGVDFYEVKSDEERKALAKEHGIEIKDTMKYGHILNEFFEQKVEETLIQPTFIYGHPTEISPLAKKNPEDPRFTDRFELFIVGREHANRFTELNDPIDQKGRFEAQLVEKAQGNDEAHEMDEDYIEALEYGMPPTGGLGIGIDRLVMLLTDSPSIRDVLLFPYMRQK</sequence>
<proteinExistence type="evidence at protein level"/>
<accession>Q53638</accession>
<dbReference type="EC" id="6.1.1.6" evidence="2"/>
<dbReference type="EMBL" id="L36472">
    <property type="protein sequence ID" value="AAA53114.1"/>
    <property type="molecule type" value="Genomic_DNA"/>
</dbReference>
<dbReference type="SMR" id="Q53638"/>
<dbReference type="GO" id="GO:0005829">
    <property type="term" value="C:cytosol"/>
    <property type="evidence" value="ECO:0007669"/>
    <property type="project" value="TreeGrafter"/>
</dbReference>
<dbReference type="GO" id="GO:0005524">
    <property type="term" value="F:ATP binding"/>
    <property type="evidence" value="ECO:0007669"/>
    <property type="project" value="UniProtKB-UniRule"/>
</dbReference>
<dbReference type="GO" id="GO:0140096">
    <property type="term" value="F:catalytic activity, acting on a protein"/>
    <property type="evidence" value="ECO:0007669"/>
    <property type="project" value="UniProtKB-ARBA"/>
</dbReference>
<dbReference type="GO" id="GO:0004824">
    <property type="term" value="F:lysine-tRNA ligase activity"/>
    <property type="evidence" value="ECO:0007669"/>
    <property type="project" value="UniProtKB-UniRule"/>
</dbReference>
<dbReference type="GO" id="GO:0000287">
    <property type="term" value="F:magnesium ion binding"/>
    <property type="evidence" value="ECO:0007669"/>
    <property type="project" value="UniProtKB-UniRule"/>
</dbReference>
<dbReference type="GO" id="GO:0016740">
    <property type="term" value="F:transferase activity"/>
    <property type="evidence" value="ECO:0007669"/>
    <property type="project" value="UniProtKB-ARBA"/>
</dbReference>
<dbReference type="GO" id="GO:0000049">
    <property type="term" value="F:tRNA binding"/>
    <property type="evidence" value="ECO:0007669"/>
    <property type="project" value="TreeGrafter"/>
</dbReference>
<dbReference type="GO" id="GO:0006430">
    <property type="term" value="P:lysyl-tRNA aminoacylation"/>
    <property type="evidence" value="ECO:0007669"/>
    <property type="project" value="UniProtKB-UniRule"/>
</dbReference>
<dbReference type="CDD" id="cd00775">
    <property type="entry name" value="LysRS_core"/>
    <property type="match status" value="1"/>
</dbReference>
<dbReference type="CDD" id="cd04322">
    <property type="entry name" value="LysRS_N"/>
    <property type="match status" value="1"/>
</dbReference>
<dbReference type="FunFam" id="2.40.50.140:FF:000024">
    <property type="entry name" value="Lysine--tRNA ligase"/>
    <property type="match status" value="1"/>
</dbReference>
<dbReference type="FunFam" id="3.30.930.10:FF:000001">
    <property type="entry name" value="Lysine--tRNA ligase"/>
    <property type="match status" value="1"/>
</dbReference>
<dbReference type="Gene3D" id="3.30.930.10">
    <property type="entry name" value="Bira Bifunctional Protein, Domain 2"/>
    <property type="match status" value="1"/>
</dbReference>
<dbReference type="Gene3D" id="2.40.50.140">
    <property type="entry name" value="Nucleic acid-binding proteins"/>
    <property type="match status" value="1"/>
</dbReference>
<dbReference type="HAMAP" id="MF_00252">
    <property type="entry name" value="Lys_tRNA_synth_class2"/>
    <property type="match status" value="1"/>
</dbReference>
<dbReference type="InterPro" id="IPR004364">
    <property type="entry name" value="Aa-tRNA-synt_II"/>
</dbReference>
<dbReference type="InterPro" id="IPR006195">
    <property type="entry name" value="aa-tRNA-synth_II"/>
</dbReference>
<dbReference type="InterPro" id="IPR045864">
    <property type="entry name" value="aa-tRNA-synth_II/BPL/LPL"/>
</dbReference>
<dbReference type="InterPro" id="IPR002313">
    <property type="entry name" value="Lys-tRNA-ligase_II"/>
</dbReference>
<dbReference type="InterPro" id="IPR034762">
    <property type="entry name" value="Lys-tRNA-ligase_II_bac/euk"/>
</dbReference>
<dbReference type="InterPro" id="IPR044136">
    <property type="entry name" value="Lys-tRNA-ligase_II_N"/>
</dbReference>
<dbReference type="InterPro" id="IPR018149">
    <property type="entry name" value="Lys-tRNA-synth_II_C"/>
</dbReference>
<dbReference type="InterPro" id="IPR012340">
    <property type="entry name" value="NA-bd_OB-fold"/>
</dbReference>
<dbReference type="InterPro" id="IPR004365">
    <property type="entry name" value="NA-bd_OB_tRNA"/>
</dbReference>
<dbReference type="NCBIfam" id="TIGR00499">
    <property type="entry name" value="lysS_bact"/>
    <property type="match status" value="1"/>
</dbReference>
<dbReference type="NCBIfam" id="NF001756">
    <property type="entry name" value="PRK00484.1"/>
    <property type="match status" value="1"/>
</dbReference>
<dbReference type="PANTHER" id="PTHR42918:SF15">
    <property type="entry name" value="LYSINE--TRNA LIGASE, CHLOROPLASTIC_MITOCHONDRIAL"/>
    <property type="match status" value="1"/>
</dbReference>
<dbReference type="PANTHER" id="PTHR42918">
    <property type="entry name" value="LYSYL-TRNA SYNTHETASE"/>
    <property type="match status" value="1"/>
</dbReference>
<dbReference type="Pfam" id="PF00152">
    <property type="entry name" value="tRNA-synt_2"/>
    <property type="match status" value="1"/>
</dbReference>
<dbReference type="Pfam" id="PF01336">
    <property type="entry name" value="tRNA_anti-codon"/>
    <property type="match status" value="1"/>
</dbReference>
<dbReference type="PIRSF" id="PIRSF039101">
    <property type="entry name" value="LysRS2"/>
    <property type="match status" value="1"/>
</dbReference>
<dbReference type="PRINTS" id="PR00982">
    <property type="entry name" value="TRNASYNTHLYS"/>
</dbReference>
<dbReference type="SUPFAM" id="SSF55681">
    <property type="entry name" value="Class II aaRS and biotin synthetases"/>
    <property type="match status" value="1"/>
</dbReference>
<dbReference type="SUPFAM" id="SSF50249">
    <property type="entry name" value="Nucleic acid-binding proteins"/>
    <property type="match status" value="1"/>
</dbReference>
<dbReference type="PROSITE" id="PS50862">
    <property type="entry name" value="AA_TRNA_LIGASE_II"/>
    <property type="match status" value="1"/>
</dbReference>
<feature type="chain" id="PRO_0000152680" description="Lysine--tRNA ligase">
    <location>
        <begin position="1"/>
        <end position="495"/>
    </location>
</feature>
<feature type="binding site" evidence="1">
    <location>
        <position position="406"/>
    </location>
    <ligand>
        <name>Mg(2+)</name>
        <dbReference type="ChEBI" id="CHEBI:18420"/>
        <label>1</label>
    </ligand>
</feature>
<feature type="binding site" evidence="1">
    <location>
        <position position="413"/>
    </location>
    <ligand>
        <name>Mg(2+)</name>
        <dbReference type="ChEBI" id="CHEBI:18420"/>
        <label>1</label>
    </ligand>
</feature>
<feature type="binding site" evidence="1">
    <location>
        <position position="413"/>
    </location>
    <ligand>
        <name>Mg(2+)</name>
        <dbReference type="ChEBI" id="CHEBI:18420"/>
        <label>2</label>
    </ligand>
</feature>
<gene>
    <name type="primary">lysS</name>
</gene>